<name>SYL_PROM5</name>
<evidence type="ECO:0000255" key="1">
    <source>
        <dbReference type="HAMAP-Rule" id="MF_00049"/>
    </source>
</evidence>
<gene>
    <name evidence="1" type="primary">leuS</name>
    <name type="ordered locus">P9515_09711</name>
</gene>
<keyword id="KW-0030">Aminoacyl-tRNA synthetase</keyword>
<keyword id="KW-0067">ATP-binding</keyword>
<keyword id="KW-0963">Cytoplasm</keyword>
<keyword id="KW-0436">Ligase</keyword>
<keyword id="KW-0547">Nucleotide-binding</keyword>
<keyword id="KW-0648">Protein biosynthesis</keyword>
<comment type="catalytic activity">
    <reaction evidence="1">
        <text>tRNA(Leu) + L-leucine + ATP = L-leucyl-tRNA(Leu) + AMP + diphosphate</text>
        <dbReference type="Rhea" id="RHEA:11688"/>
        <dbReference type="Rhea" id="RHEA-COMP:9613"/>
        <dbReference type="Rhea" id="RHEA-COMP:9622"/>
        <dbReference type="ChEBI" id="CHEBI:30616"/>
        <dbReference type="ChEBI" id="CHEBI:33019"/>
        <dbReference type="ChEBI" id="CHEBI:57427"/>
        <dbReference type="ChEBI" id="CHEBI:78442"/>
        <dbReference type="ChEBI" id="CHEBI:78494"/>
        <dbReference type="ChEBI" id="CHEBI:456215"/>
        <dbReference type="EC" id="6.1.1.4"/>
    </reaction>
</comment>
<comment type="subcellular location">
    <subcellularLocation>
        <location evidence="1">Cytoplasm</location>
    </subcellularLocation>
</comment>
<comment type="similarity">
    <text evidence="1">Belongs to the class-I aminoacyl-tRNA synthetase family.</text>
</comment>
<organism>
    <name type="scientific">Prochlorococcus marinus (strain MIT 9515)</name>
    <dbReference type="NCBI Taxonomy" id="167542"/>
    <lineage>
        <taxon>Bacteria</taxon>
        <taxon>Bacillati</taxon>
        <taxon>Cyanobacteriota</taxon>
        <taxon>Cyanophyceae</taxon>
        <taxon>Synechococcales</taxon>
        <taxon>Prochlorococcaceae</taxon>
        <taxon>Prochlorococcus</taxon>
    </lineage>
</organism>
<reference key="1">
    <citation type="journal article" date="2007" name="PLoS Genet.">
        <title>Patterns and implications of gene gain and loss in the evolution of Prochlorococcus.</title>
        <authorList>
            <person name="Kettler G.C."/>
            <person name="Martiny A.C."/>
            <person name="Huang K."/>
            <person name="Zucker J."/>
            <person name="Coleman M.L."/>
            <person name="Rodrigue S."/>
            <person name="Chen F."/>
            <person name="Lapidus A."/>
            <person name="Ferriera S."/>
            <person name="Johnson J."/>
            <person name="Steglich C."/>
            <person name="Church G.M."/>
            <person name="Richardson P."/>
            <person name="Chisholm S.W."/>
        </authorList>
    </citation>
    <scope>NUCLEOTIDE SEQUENCE [LARGE SCALE GENOMIC DNA]</scope>
    <source>
        <strain>MIT 9515</strain>
    </source>
</reference>
<accession>A2BWL7</accession>
<feature type="chain" id="PRO_0000334790" description="Leucine--tRNA ligase">
    <location>
        <begin position="1"/>
        <end position="864"/>
    </location>
</feature>
<feature type="short sequence motif" description="'HIGH' region">
    <location>
        <begin position="57"/>
        <end position="67"/>
    </location>
</feature>
<feature type="short sequence motif" description="'KMSKS' region">
    <location>
        <begin position="628"/>
        <end position="632"/>
    </location>
</feature>
<feature type="binding site" evidence="1">
    <location>
        <position position="631"/>
    </location>
    <ligand>
        <name>ATP</name>
        <dbReference type="ChEBI" id="CHEBI:30616"/>
    </ligand>
</feature>
<sequence>MIYSENTDEKSNQHTNNLYKPCEIENKWQEIWDKENLYKTDDKSSKKEKFYALSMFPYPSGNLHMGHVRNYVITDLIARFQRFQGKSLLHPMGWDAFGLPAENAAIERGINPNDWTKKNIAHMKSQLKLLGLSVDWDKEFATCDENYYLWTQFLFLELHKSGLVYQKESEVNWDPIDNTVLANEQVDSEGKSWRSGAKVEKKLLTQWFLKITNYTEELLQDLEKLSEWPERVKIMQENWIGKSKGANIIFKINEFENEKIKVFTTRPDTLFGVTYIAISINNPLINKISDNEILSKLENLKIYLKKNQDKDQKKIGIPTNLKAINPINSNEIPIWIASYVLDEYGTGAVMGVPAHDQRDFEFAKINFIDIKQVIIKDKDNDKSTFKLKNAFTDNGFLINSNNFNGLCNNDAKKQILEQGKINGWAEEEIHYRLRDWLISRQRYWGCPIPIIKCNNCGSIPVNKKNLPVKLPKEIEISSNKINSLGSYKDWVKTTCPKCGNLASRETDTMDTFMCSSWYFLRYPSSKCKTKPFEKDNVNKWLPVDQYVGGVEHAILHLLYARFLTKALRDNNLFDIDEPFKKLLTQGMVQAAAYKNTKTGKYISPKDIKDFNNPTDPNDDSKLEVLFEKMSKSKYNGIDPESVIKKYGADTARMFILFKAPPEKDLEWGDSDVEGQYRFLCRIWKLFLDYRNNESWDNQKNYNREKENSLTKSINIAIKEISNDIKNNQFNTAISELMKFYNSLSSSMIYVNKDLRKDAFKKFCILLAPFAPHIAEEIWNLIGYQKSVHLERWPIFNEDALKEDCYELVIQINGKVRDKINVGIDISEDQIKQKTLTRPNVRKWIDQKTIRKIIIVKGKIMNIVV</sequence>
<protein>
    <recommendedName>
        <fullName evidence="1">Leucine--tRNA ligase</fullName>
        <ecNumber evidence="1">6.1.1.4</ecNumber>
    </recommendedName>
    <alternativeName>
        <fullName evidence="1">Leucyl-tRNA synthetase</fullName>
        <shortName evidence="1">LeuRS</shortName>
    </alternativeName>
</protein>
<dbReference type="EC" id="6.1.1.4" evidence="1"/>
<dbReference type="EMBL" id="CP000552">
    <property type="protein sequence ID" value="ABM72178.1"/>
    <property type="molecule type" value="Genomic_DNA"/>
</dbReference>
<dbReference type="RefSeq" id="WP_011820280.1">
    <property type="nucleotide sequence ID" value="NC_008817.1"/>
</dbReference>
<dbReference type="SMR" id="A2BWL7"/>
<dbReference type="STRING" id="167542.P9515_09711"/>
<dbReference type="GeneID" id="60201271"/>
<dbReference type="KEGG" id="pmc:P9515_09711"/>
<dbReference type="eggNOG" id="COG0495">
    <property type="taxonomic scope" value="Bacteria"/>
</dbReference>
<dbReference type="HOGENOM" id="CLU_004427_0_0_3"/>
<dbReference type="OrthoDB" id="9810365at2"/>
<dbReference type="Proteomes" id="UP000001589">
    <property type="component" value="Chromosome"/>
</dbReference>
<dbReference type="GO" id="GO:0005829">
    <property type="term" value="C:cytosol"/>
    <property type="evidence" value="ECO:0007669"/>
    <property type="project" value="TreeGrafter"/>
</dbReference>
<dbReference type="GO" id="GO:0002161">
    <property type="term" value="F:aminoacyl-tRNA deacylase activity"/>
    <property type="evidence" value="ECO:0007669"/>
    <property type="project" value="InterPro"/>
</dbReference>
<dbReference type="GO" id="GO:0005524">
    <property type="term" value="F:ATP binding"/>
    <property type="evidence" value="ECO:0007669"/>
    <property type="project" value="UniProtKB-UniRule"/>
</dbReference>
<dbReference type="GO" id="GO:0004823">
    <property type="term" value="F:leucine-tRNA ligase activity"/>
    <property type="evidence" value="ECO:0007669"/>
    <property type="project" value="UniProtKB-UniRule"/>
</dbReference>
<dbReference type="GO" id="GO:0006429">
    <property type="term" value="P:leucyl-tRNA aminoacylation"/>
    <property type="evidence" value="ECO:0007669"/>
    <property type="project" value="UniProtKB-UniRule"/>
</dbReference>
<dbReference type="CDD" id="cd07958">
    <property type="entry name" value="Anticodon_Ia_Leu_BEm"/>
    <property type="match status" value="1"/>
</dbReference>
<dbReference type="CDD" id="cd00812">
    <property type="entry name" value="LeuRS_core"/>
    <property type="match status" value="1"/>
</dbReference>
<dbReference type="FunFam" id="3.40.50.620:FF:000003">
    <property type="entry name" value="Leucine--tRNA ligase"/>
    <property type="match status" value="1"/>
</dbReference>
<dbReference type="FunFam" id="3.40.50.620:FF:000056">
    <property type="entry name" value="Leucine--tRNA ligase"/>
    <property type="match status" value="1"/>
</dbReference>
<dbReference type="FunFam" id="1.10.730.10:FF:000011">
    <property type="entry name" value="Leucine--tRNA ligase chloroplastic/mitochondrial"/>
    <property type="match status" value="1"/>
</dbReference>
<dbReference type="Gene3D" id="3.40.50.620">
    <property type="entry name" value="HUPs"/>
    <property type="match status" value="2"/>
</dbReference>
<dbReference type="Gene3D" id="1.10.730.10">
    <property type="entry name" value="Isoleucyl-tRNA Synthetase, Domain 1"/>
    <property type="match status" value="1"/>
</dbReference>
<dbReference type="HAMAP" id="MF_00049_B">
    <property type="entry name" value="Leu_tRNA_synth_B"/>
    <property type="match status" value="1"/>
</dbReference>
<dbReference type="InterPro" id="IPR001412">
    <property type="entry name" value="aa-tRNA-synth_I_CS"/>
</dbReference>
<dbReference type="InterPro" id="IPR002300">
    <property type="entry name" value="aa-tRNA-synth_Ia"/>
</dbReference>
<dbReference type="InterPro" id="IPR002302">
    <property type="entry name" value="Leu-tRNA-ligase"/>
</dbReference>
<dbReference type="InterPro" id="IPR025709">
    <property type="entry name" value="Leu_tRNA-synth_edit"/>
</dbReference>
<dbReference type="InterPro" id="IPR013155">
    <property type="entry name" value="M/V/L/I-tRNA-synth_anticd-bd"/>
</dbReference>
<dbReference type="InterPro" id="IPR015413">
    <property type="entry name" value="Methionyl/Leucyl_tRNA_Synth"/>
</dbReference>
<dbReference type="InterPro" id="IPR014729">
    <property type="entry name" value="Rossmann-like_a/b/a_fold"/>
</dbReference>
<dbReference type="InterPro" id="IPR009080">
    <property type="entry name" value="tRNAsynth_Ia_anticodon-bd"/>
</dbReference>
<dbReference type="InterPro" id="IPR009008">
    <property type="entry name" value="Val/Leu/Ile-tRNA-synth_edit"/>
</dbReference>
<dbReference type="NCBIfam" id="TIGR00396">
    <property type="entry name" value="leuS_bact"/>
    <property type="match status" value="1"/>
</dbReference>
<dbReference type="PANTHER" id="PTHR43740:SF2">
    <property type="entry name" value="LEUCINE--TRNA LIGASE, MITOCHONDRIAL"/>
    <property type="match status" value="1"/>
</dbReference>
<dbReference type="PANTHER" id="PTHR43740">
    <property type="entry name" value="LEUCYL-TRNA SYNTHETASE"/>
    <property type="match status" value="1"/>
</dbReference>
<dbReference type="Pfam" id="PF08264">
    <property type="entry name" value="Anticodon_1"/>
    <property type="match status" value="1"/>
</dbReference>
<dbReference type="Pfam" id="PF00133">
    <property type="entry name" value="tRNA-synt_1"/>
    <property type="match status" value="2"/>
</dbReference>
<dbReference type="Pfam" id="PF13603">
    <property type="entry name" value="tRNA-synt_1_2"/>
    <property type="match status" value="1"/>
</dbReference>
<dbReference type="Pfam" id="PF09334">
    <property type="entry name" value="tRNA-synt_1g"/>
    <property type="match status" value="1"/>
</dbReference>
<dbReference type="PRINTS" id="PR00985">
    <property type="entry name" value="TRNASYNTHLEU"/>
</dbReference>
<dbReference type="SUPFAM" id="SSF47323">
    <property type="entry name" value="Anticodon-binding domain of a subclass of class I aminoacyl-tRNA synthetases"/>
    <property type="match status" value="1"/>
</dbReference>
<dbReference type="SUPFAM" id="SSF52374">
    <property type="entry name" value="Nucleotidylyl transferase"/>
    <property type="match status" value="1"/>
</dbReference>
<dbReference type="SUPFAM" id="SSF50677">
    <property type="entry name" value="ValRS/IleRS/LeuRS editing domain"/>
    <property type="match status" value="1"/>
</dbReference>
<dbReference type="PROSITE" id="PS00178">
    <property type="entry name" value="AA_TRNA_LIGASE_I"/>
    <property type="match status" value="1"/>
</dbReference>
<proteinExistence type="inferred from homology"/>